<organism>
    <name type="scientific">Pseudomonas entomophila (strain L48)</name>
    <dbReference type="NCBI Taxonomy" id="384676"/>
    <lineage>
        <taxon>Bacteria</taxon>
        <taxon>Pseudomonadati</taxon>
        <taxon>Pseudomonadota</taxon>
        <taxon>Gammaproteobacteria</taxon>
        <taxon>Pseudomonadales</taxon>
        <taxon>Pseudomonadaceae</taxon>
        <taxon>Pseudomonas</taxon>
    </lineage>
</organism>
<gene>
    <name evidence="1" type="primary">hisI</name>
    <name type="ordered locus">PSEEN5076</name>
</gene>
<keyword id="KW-0028">Amino-acid biosynthesis</keyword>
<keyword id="KW-0963">Cytoplasm</keyword>
<keyword id="KW-0368">Histidine biosynthesis</keyword>
<keyword id="KW-0378">Hydrolase</keyword>
<keyword id="KW-0460">Magnesium</keyword>
<keyword id="KW-0479">Metal-binding</keyword>
<keyword id="KW-0862">Zinc</keyword>
<dbReference type="EC" id="3.5.4.19" evidence="1"/>
<dbReference type="EMBL" id="CT573326">
    <property type="protein sequence ID" value="CAK17709.1"/>
    <property type="molecule type" value="Genomic_DNA"/>
</dbReference>
<dbReference type="RefSeq" id="WP_011536069.1">
    <property type="nucleotide sequence ID" value="NC_008027.1"/>
</dbReference>
<dbReference type="SMR" id="Q1I3S7"/>
<dbReference type="STRING" id="384676.PSEEN5076"/>
<dbReference type="GeneID" id="58766237"/>
<dbReference type="KEGG" id="pen:PSEEN5076"/>
<dbReference type="eggNOG" id="COG0139">
    <property type="taxonomic scope" value="Bacteria"/>
</dbReference>
<dbReference type="HOGENOM" id="CLU_048577_5_0_6"/>
<dbReference type="OrthoDB" id="9795769at2"/>
<dbReference type="UniPathway" id="UPA00031">
    <property type="reaction ID" value="UER00008"/>
</dbReference>
<dbReference type="Proteomes" id="UP000000658">
    <property type="component" value="Chromosome"/>
</dbReference>
<dbReference type="GO" id="GO:0005737">
    <property type="term" value="C:cytoplasm"/>
    <property type="evidence" value="ECO:0007669"/>
    <property type="project" value="UniProtKB-SubCell"/>
</dbReference>
<dbReference type="GO" id="GO:0000287">
    <property type="term" value="F:magnesium ion binding"/>
    <property type="evidence" value="ECO:0007669"/>
    <property type="project" value="UniProtKB-UniRule"/>
</dbReference>
<dbReference type="GO" id="GO:0004635">
    <property type="term" value="F:phosphoribosyl-AMP cyclohydrolase activity"/>
    <property type="evidence" value="ECO:0007669"/>
    <property type="project" value="UniProtKB-UniRule"/>
</dbReference>
<dbReference type="GO" id="GO:0008270">
    <property type="term" value="F:zinc ion binding"/>
    <property type="evidence" value="ECO:0007669"/>
    <property type="project" value="UniProtKB-UniRule"/>
</dbReference>
<dbReference type="GO" id="GO:0000105">
    <property type="term" value="P:L-histidine biosynthetic process"/>
    <property type="evidence" value="ECO:0007669"/>
    <property type="project" value="UniProtKB-UniRule"/>
</dbReference>
<dbReference type="FunFam" id="3.10.20.810:FF:000001">
    <property type="entry name" value="Histidine biosynthesis bifunctional protein HisIE"/>
    <property type="match status" value="1"/>
</dbReference>
<dbReference type="Gene3D" id="3.10.20.810">
    <property type="entry name" value="Phosphoribosyl-AMP cyclohydrolase"/>
    <property type="match status" value="1"/>
</dbReference>
<dbReference type="HAMAP" id="MF_01021">
    <property type="entry name" value="HisI"/>
    <property type="match status" value="1"/>
</dbReference>
<dbReference type="InterPro" id="IPR026660">
    <property type="entry name" value="PRA-CH"/>
</dbReference>
<dbReference type="InterPro" id="IPR002496">
    <property type="entry name" value="PRib_AMP_CycHydrolase_dom"/>
</dbReference>
<dbReference type="InterPro" id="IPR038019">
    <property type="entry name" value="PRib_AMP_CycHydrolase_sf"/>
</dbReference>
<dbReference type="NCBIfam" id="NF000768">
    <property type="entry name" value="PRK00051.1"/>
    <property type="match status" value="1"/>
</dbReference>
<dbReference type="PANTHER" id="PTHR42945">
    <property type="entry name" value="HISTIDINE BIOSYNTHESIS BIFUNCTIONAL PROTEIN"/>
    <property type="match status" value="1"/>
</dbReference>
<dbReference type="PANTHER" id="PTHR42945:SF1">
    <property type="entry name" value="HISTIDINE BIOSYNTHESIS BIFUNCTIONAL PROTEIN HIS7"/>
    <property type="match status" value="1"/>
</dbReference>
<dbReference type="Pfam" id="PF01502">
    <property type="entry name" value="PRA-CH"/>
    <property type="match status" value="1"/>
</dbReference>
<dbReference type="SUPFAM" id="SSF141734">
    <property type="entry name" value="HisI-like"/>
    <property type="match status" value="1"/>
</dbReference>
<evidence type="ECO:0000255" key="1">
    <source>
        <dbReference type="HAMAP-Rule" id="MF_01021"/>
    </source>
</evidence>
<proteinExistence type="inferred from homology"/>
<accession>Q1I3S7</accession>
<reference key="1">
    <citation type="journal article" date="2006" name="Nat. Biotechnol.">
        <title>Complete genome sequence of the entomopathogenic and metabolically versatile soil bacterium Pseudomonas entomophila.</title>
        <authorList>
            <person name="Vodovar N."/>
            <person name="Vallenet D."/>
            <person name="Cruveiller S."/>
            <person name="Rouy Z."/>
            <person name="Barbe V."/>
            <person name="Acosta C."/>
            <person name="Cattolico L."/>
            <person name="Jubin C."/>
            <person name="Lajus A."/>
            <person name="Segurens B."/>
            <person name="Vacherie B."/>
            <person name="Wincker P."/>
            <person name="Weissenbach J."/>
            <person name="Lemaitre B."/>
            <person name="Medigue C."/>
            <person name="Boccard F."/>
        </authorList>
    </citation>
    <scope>NUCLEOTIDE SEQUENCE [LARGE SCALE GENOMIC DNA]</scope>
    <source>
        <strain>L48</strain>
    </source>
</reference>
<sequence length="130" mass="15005">MKDWLDEIKWNSDGLVPAIAQDHKTGRVLMMAWMNRESLALTAAEHRAIYWSRSRGKLWRKGEESGHVQKLHEMRLDCDADVIILMVEQLGHIACHTGRESCFYRVFEDGQWKTVDPVLKDPNAIYSAGH</sequence>
<name>HIS3_PSEE4</name>
<feature type="chain" id="PRO_1000063426" description="Phosphoribosyl-AMP cyclohydrolase">
    <location>
        <begin position="1"/>
        <end position="130"/>
    </location>
</feature>
<feature type="binding site" evidence="1">
    <location>
        <position position="77"/>
    </location>
    <ligand>
        <name>Mg(2+)</name>
        <dbReference type="ChEBI" id="CHEBI:18420"/>
    </ligand>
</feature>
<feature type="binding site" evidence="1">
    <location>
        <position position="78"/>
    </location>
    <ligand>
        <name>Zn(2+)</name>
        <dbReference type="ChEBI" id="CHEBI:29105"/>
        <note>ligand shared between dimeric partners</note>
    </ligand>
</feature>
<feature type="binding site" evidence="1">
    <location>
        <position position="79"/>
    </location>
    <ligand>
        <name>Mg(2+)</name>
        <dbReference type="ChEBI" id="CHEBI:18420"/>
    </ligand>
</feature>
<feature type="binding site" evidence="1">
    <location>
        <position position="81"/>
    </location>
    <ligand>
        <name>Mg(2+)</name>
        <dbReference type="ChEBI" id="CHEBI:18420"/>
    </ligand>
</feature>
<feature type="binding site" evidence="1">
    <location>
        <position position="95"/>
    </location>
    <ligand>
        <name>Zn(2+)</name>
        <dbReference type="ChEBI" id="CHEBI:29105"/>
        <note>ligand shared between dimeric partners</note>
    </ligand>
</feature>
<feature type="binding site" evidence="1">
    <location>
        <position position="102"/>
    </location>
    <ligand>
        <name>Zn(2+)</name>
        <dbReference type="ChEBI" id="CHEBI:29105"/>
        <note>ligand shared between dimeric partners</note>
    </ligand>
</feature>
<comment type="function">
    <text evidence="1">Catalyzes the hydrolysis of the adenine ring of phosphoribosyl-AMP.</text>
</comment>
<comment type="catalytic activity">
    <reaction evidence="1">
        <text>1-(5-phospho-beta-D-ribosyl)-5'-AMP + H2O = 1-(5-phospho-beta-D-ribosyl)-5-[(5-phospho-beta-D-ribosylamino)methylideneamino]imidazole-4-carboxamide</text>
        <dbReference type="Rhea" id="RHEA:20049"/>
        <dbReference type="ChEBI" id="CHEBI:15377"/>
        <dbReference type="ChEBI" id="CHEBI:58435"/>
        <dbReference type="ChEBI" id="CHEBI:59457"/>
        <dbReference type="EC" id="3.5.4.19"/>
    </reaction>
</comment>
<comment type="cofactor">
    <cofactor evidence="1">
        <name>Mg(2+)</name>
        <dbReference type="ChEBI" id="CHEBI:18420"/>
    </cofactor>
    <text evidence="1">Binds 1 Mg(2+) ion per subunit.</text>
</comment>
<comment type="cofactor">
    <cofactor evidence="1">
        <name>Zn(2+)</name>
        <dbReference type="ChEBI" id="CHEBI:29105"/>
    </cofactor>
    <text evidence="1">Binds 1 zinc ion per subunit.</text>
</comment>
<comment type="pathway">
    <text evidence="1">Amino-acid biosynthesis; L-histidine biosynthesis; L-histidine from 5-phospho-alpha-D-ribose 1-diphosphate: step 3/9.</text>
</comment>
<comment type="subunit">
    <text evidence="1">Homodimer.</text>
</comment>
<comment type="subcellular location">
    <subcellularLocation>
        <location evidence="1">Cytoplasm</location>
    </subcellularLocation>
</comment>
<comment type="similarity">
    <text evidence="1">Belongs to the PRA-CH family.</text>
</comment>
<protein>
    <recommendedName>
        <fullName evidence="1">Phosphoribosyl-AMP cyclohydrolase</fullName>
        <shortName evidence="1">PRA-CH</shortName>
        <ecNumber evidence="1">3.5.4.19</ecNumber>
    </recommendedName>
</protein>